<proteinExistence type="inferred from homology"/>
<accession>C1EQT1</accession>
<keyword id="KW-0131">Cell cycle</keyword>
<keyword id="KW-0132">Cell division</keyword>
<keyword id="KW-0159">Chromosome partition</keyword>
<keyword id="KW-0963">Cytoplasm</keyword>
<organism>
    <name type="scientific">Bacillus cereus (strain 03BB102)</name>
    <dbReference type="NCBI Taxonomy" id="572264"/>
    <lineage>
        <taxon>Bacteria</taxon>
        <taxon>Bacillati</taxon>
        <taxon>Bacillota</taxon>
        <taxon>Bacilli</taxon>
        <taxon>Bacillales</taxon>
        <taxon>Bacillaceae</taxon>
        <taxon>Bacillus</taxon>
        <taxon>Bacillus cereus group</taxon>
    </lineage>
</organism>
<sequence length="190" mass="21423">MDRTEQKSIIEGLLFVSGDEGIYPEQIAKVLEIEGNEVIDILEEMQKECEGAHRGLQIVQYAKVYRFATKKEHASYYQKLIEIPTAASLSQAALETLAIVAYRQPITRTEMEEIRGVKTDKALQTLVSHLLIKEMGRAEGPGRPILYGTTKEFLDTFGLKTLDDLPPLSEENEQMNEADLFFGSLQEISK</sequence>
<gene>
    <name evidence="1" type="primary">scpB</name>
    <name type="ordered locus">BCA_4169</name>
</gene>
<protein>
    <recommendedName>
        <fullName evidence="1">Segregation and condensation protein B</fullName>
    </recommendedName>
</protein>
<reference key="1">
    <citation type="submission" date="2009-02" db="EMBL/GenBank/DDBJ databases">
        <title>Genome sequence of Bacillus cereus 03BB102.</title>
        <authorList>
            <person name="Dodson R.J."/>
            <person name="Jackson P."/>
            <person name="Munk A.C."/>
            <person name="Brettin T."/>
            <person name="Bruce D."/>
            <person name="Detter C."/>
            <person name="Tapia R."/>
            <person name="Han C."/>
            <person name="Sutton G."/>
            <person name="Sims D."/>
        </authorList>
    </citation>
    <scope>NUCLEOTIDE SEQUENCE [LARGE SCALE GENOMIC DNA]</scope>
    <source>
        <strain>03BB102</strain>
    </source>
</reference>
<feature type="chain" id="PRO_1000187528" description="Segregation and condensation protein B">
    <location>
        <begin position="1"/>
        <end position="190"/>
    </location>
</feature>
<evidence type="ECO:0000255" key="1">
    <source>
        <dbReference type="HAMAP-Rule" id="MF_01804"/>
    </source>
</evidence>
<dbReference type="EMBL" id="CP001407">
    <property type="protein sequence ID" value="ACO26601.1"/>
    <property type="molecule type" value="Genomic_DNA"/>
</dbReference>
<dbReference type="RefSeq" id="WP_000376225.1">
    <property type="nucleotide sequence ID" value="NZ_CP009318.1"/>
</dbReference>
<dbReference type="SMR" id="C1EQT1"/>
<dbReference type="GeneID" id="45023946"/>
<dbReference type="KEGG" id="bcx:BCA_4169"/>
<dbReference type="PATRIC" id="fig|572264.18.peg.4119"/>
<dbReference type="Proteomes" id="UP000002210">
    <property type="component" value="Chromosome"/>
</dbReference>
<dbReference type="GO" id="GO:0005737">
    <property type="term" value="C:cytoplasm"/>
    <property type="evidence" value="ECO:0007669"/>
    <property type="project" value="UniProtKB-SubCell"/>
</dbReference>
<dbReference type="GO" id="GO:0051301">
    <property type="term" value="P:cell division"/>
    <property type="evidence" value="ECO:0007669"/>
    <property type="project" value="UniProtKB-KW"/>
</dbReference>
<dbReference type="GO" id="GO:0051304">
    <property type="term" value="P:chromosome separation"/>
    <property type="evidence" value="ECO:0007669"/>
    <property type="project" value="InterPro"/>
</dbReference>
<dbReference type="GO" id="GO:0006260">
    <property type="term" value="P:DNA replication"/>
    <property type="evidence" value="ECO:0007669"/>
    <property type="project" value="UniProtKB-UniRule"/>
</dbReference>
<dbReference type="Gene3D" id="1.10.10.10">
    <property type="entry name" value="Winged helix-like DNA-binding domain superfamily/Winged helix DNA-binding domain"/>
    <property type="match status" value="2"/>
</dbReference>
<dbReference type="HAMAP" id="MF_01804">
    <property type="entry name" value="ScpB"/>
    <property type="match status" value="1"/>
</dbReference>
<dbReference type="InterPro" id="IPR005234">
    <property type="entry name" value="ScpB_csome_segregation"/>
</dbReference>
<dbReference type="InterPro" id="IPR036388">
    <property type="entry name" value="WH-like_DNA-bd_sf"/>
</dbReference>
<dbReference type="InterPro" id="IPR036390">
    <property type="entry name" value="WH_DNA-bd_sf"/>
</dbReference>
<dbReference type="NCBIfam" id="TIGR00281">
    <property type="entry name" value="SMC-Scp complex subunit ScpB"/>
    <property type="match status" value="1"/>
</dbReference>
<dbReference type="PANTHER" id="PTHR34298">
    <property type="entry name" value="SEGREGATION AND CONDENSATION PROTEIN B"/>
    <property type="match status" value="1"/>
</dbReference>
<dbReference type="PANTHER" id="PTHR34298:SF2">
    <property type="entry name" value="SEGREGATION AND CONDENSATION PROTEIN B"/>
    <property type="match status" value="1"/>
</dbReference>
<dbReference type="Pfam" id="PF04079">
    <property type="entry name" value="SMC_ScpB"/>
    <property type="match status" value="1"/>
</dbReference>
<dbReference type="PIRSF" id="PIRSF019345">
    <property type="entry name" value="ScpB"/>
    <property type="match status" value="1"/>
</dbReference>
<dbReference type="SUPFAM" id="SSF46785">
    <property type="entry name" value="Winged helix' DNA-binding domain"/>
    <property type="match status" value="2"/>
</dbReference>
<comment type="function">
    <text evidence="1">Participates in chromosomal partition during cell division. May act via the formation of a condensin-like complex containing Smc and ScpA that pull DNA away from mid-cell into both cell halves.</text>
</comment>
<comment type="subunit">
    <text evidence="1">Homodimer. Homodimerization may be required to stabilize the binding of ScpA to the Smc head domains. Component of a cohesin-like complex composed of ScpA, ScpB and the Smc homodimer, in which ScpA and ScpB bind to the head domain of Smc. The presence of the three proteins is required for the association of the complex with DNA.</text>
</comment>
<comment type="subcellular location">
    <subcellularLocation>
        <location evidence="1">Cytoplasm</location>
    </subcellularLocation>
    <text evidence="1">Associated with two foci at the outer edges of the nucleoid region in young cells, and at four foci within both cell halves in older cells.</text>
</comment>
<comment type="similarity">
    <text evidence="1">Belongs to the ScpB family.</text>
</comment>
<name>SCPB_BACC3</name>